<feature type="signal peptide" evidence="2">
    <location>
        <begin position="1"/>
        <end position="22"/>
    </location>
</feature>
<feature type="chain" id="PRO_0000367927" description="Common pilus major fimbrillin subunit EcpA">
    <location>
        <begin position="23"/>
        <end position="195"/>
    </location>
</feature>
<name>ECPA_ECO5E</name>
<reference key="1">
    <citation type="journal article" date="2011" name="Proc. Natl. Acad. Sci. U.S.A.">
        <title>Genomic anatomy of Escherichia coli O157:H7 outbreaks.</title>
        <authorList>
            <person name="Eppinger M."/>
            <person name="Mammel M.K."/>
            <person name="Leclerc J.E."/>
            <person name="Ravel J."/>
            <person name="Cebula T.A."/>
        </authorList>
    </citation>
    <scope>NUCLEOTIDE SEQUENCE [LARGE SCALE GENOMIC DNA]</scope>
    <source>
        <strain>EC4115 / EHEC</strain>
    </source>
</reference>
<protein>
    <recommendedName>
        <fullName>Common pilus major fimbrillin subunit EcpA</fullName>
    </recommendedName>
    <alternativeName>
        <fullName>MatB fimbrillin</fullName>
    </alternativeName>
</protein>
<gene>
    <name type="primary">ecpA</name>
    <name type="synonym">matB</name>
    <name type="ordered locus">ECH74115_0339</name>
</gene>
<dbReference type="EMBL" id="CP001164">
    <property type="protein sequence ID" value="ACI37804.1"/>
    <property type="molecule type" value="Genomic_DNA"/>
</dbReference>
<dbReference type="RefSeq" id="WP_000730972.1">
    <property type="nucleotide sequence ID" value="NC_011353.1"/>
</dbReference>
<dbReference type="SMR" id="B5Z1N2"/>
<dbReference type="GeneID" id="75204620"/>
<dbReference type="KEGG" id="ecf:ECH74115_0339"/>
<dbReference type="HOGENOM" id="CLU_120328_0_0_6"/>
<dbReference type="GO" id="GO:0009289">
    <property type="term" value="C:pilus"/>
    <property type="evidence" value="ECO:0007669"/>
    <property type="project" value="UniProtKB-SubCell"/>
</dbReference>
<dbReference type="Gene3D" id="2.60.40.3290">
    <property type="entry name" value="Fimbrial protein EcpA"/>
    <property type="match status" value="1"/>
</dbReference>
<dbReference type="InterPro" id="IPR016514">
    <property type="entry name" value="EcpA"/>
</dbReference>
<dbReference type="InterPro" id="IPR038478">
    <property type="entry name" value="Fimbrillin_EcpA_sf"/>
</dbReference>
<dbReference type="Pfam" id="PF16449">
    <property type="entry name" value="MatB"/>
    <property type="match status" value="1"/>
</dbReference>
<dbReference type="PIRSF" id="PIRSF007320">
    <property type="entry name" value="Fimbrillin_MatB"/>
    <property type="match status" value="1"/>
</dbReference>
<proteinExistence type="inferred from homology"/>
<evidence type="ECO:0000250" key="1"/>
<evidence type="ECO:0000255" key="2"/>
<evidence type="ECO:0000305" key="3"/>
<sequence length="195" mass="20111">MKKKVLAIALVTVFTGMGVAQAADVTAQAVATWSATAKKDTTSKLVVTPLGSLAFQYAEGIKGFNSQKGLFDVAIEGDSTATAFKLTSRLITNTLTQLDTSGSTLNVGVDYNGAAVEKTGDTVMIDTANGVLGGNLSPLANGYNASNRTTAQDGFTFSIISGTTNGTTAVTDYSTLPEGIWSGDVSVQFDATWTS</sequence>
<comment type="function">
    <text evidence="1">Part of the ecpRABCDE operon, which encodes the E.coli common pilus (ECP). ECP is found in both commensal and pathogenic strains and plays a dual role in early-stage biofilm development and host cell recognition. Major subunit of the fimbria (By similarity).</text>
</comment>
<comment type="subunit">
    <text evidence="1">Self-associates. Forms filaments. Interacts with EcpD (By similarity).</text>
</comment>
<comment type="subcellular location">
    <subcellularLocation>
        <location evidence="1">Fimbrium</location>
    </subcellularLocation>
</comment>
<comment type="induction">
    <text evidence="1">Negatively regulated by H-NS. Positively regulated by IHF and EcpR (By similarity).</text>
</comment>
<comment type="similarity">
    <text evidence="3">Belongs to the EcpA/MatB fimbrillin family.</text>
</comment>
<keyword id="KW-0281">Fimbrium</keyword>
<keyword id="KW-0732">Signal</keyword>
<accession>B5Z1N2</accession>
<organism>
    <name type="scientific">Escherichia coli O157:H7 (strain EC4115 / EHEC)</name>
    <dbReference type="NCBI Taxonomy" id="444450"/>
    <lineage>
        <taxon>Bacteria</taxon>
        <taxon>Pseudomonadati</taxon>
        <taxon>Pseudomonadota</taxon>
        <taxon>Gammaproteobacteria</taxon>
        <taxon>Enterobacterales</taxon>
        <taxon>Enterobacteriaceae</taxon>
        <taxon>Escherichia</taxon>
    </lineage>
</organism>